<accession>Q9ZI57</accession>
<evidence type="ECO:0000255" key="1">
    <source>
        <dbReference type="HAMAP-Rule" id="MF_01657"/>
    </source>
</evidence>
<proteinExistence type="inferred from homology"/>
<keyword id="KW-0058">Aromatic hydrocarbons catabolism</keyword>
<keyword id="KW-0520">NAD</keyword>
<keyword id="KW-0560">Oxidoreductase</keyword>
<reference key="1">
    <citation type="journal article" date="2000" name="Gene">
        <title>Complete nucleotide sequence and evolutionary significance of a chromosomally encoded naphthalene-degradation lower pathway from Pseudomonas stutzeri AN10.</title>
        <authorList>
            <person name="Bosch R."/>
            <person name="Garcia-Valdes E."/>
            <person name="Moore E.R.B."/>
        </authorList>
    </citation>
    <scope>NUCLEOTIDE SEQUENCE [GENOMIC DNA]</scope>
    <source>
        <strain>AN10</strain>
    </source>
</reference>
<name>ACDH_STUST</name>
<sequence>MSKKLKAAIIGPGNIGTDLVMKMLRSEWIEPVWMVGIDPESDGLKRAREFGLKTTAEGVDGLLPHVLEDDIRIAFDATSAYVHAENSRKLNELGVLMVDLTPAAIGPYCVPPVNLKQHVGTLEMNVNMVTCGGQATIPMVAAVSRVQPVAYGEIVATVSSRSIGPGTRKNIDEFTRTTAGAIEQVGGAKEGKAIIVVNPAEPPLMMRDTIHCLTETEPDQDAITASVHAMIAEVQKYVPGYRLKNGPVFDGNRVSIFMEVEGLGDYLPKYAGNLDIMTAAALRTGEMFAEEIASGTIQLPRREAALA</sequence>
<protein>
    <recommendedName>
        <fullName evidence="1">Acetaldehyde dehydrogenase</fullName>
        <ecNumber evidence="1">1.2.1.10</ecNumber>
    </recommendedName>
    <alternativeName>
        <fullName evidence="1">Acetaldehyde dehydrogenase [acetylating]</fullName>
    </alternativeName>
</protein>
<dbReference type="EC" id="1.2.1.10" evidence="1"/>
<dbReference type="EMBL" id="AF039534">
    <property type="protein sequence ID" value="AAD02152.1"/>
    <property type="molecule type" value="Genomic_DNA"/>
</dbReference>
<dbReference type="RefSeq" id="WP_003292099.1">
    <property type="nucleotide sequence ID" value="NZ_JAMOIE010000111.1"/>
</dbReference>
<dbReference type="SMR" id="Q9ZI57"/>
<dbReference type="OrthoDB" id="9786743at2"/>
<dbReference type="GO" id="GO:0008774">
    <property type="term" value="F:acetaldehyde dehydrogenase (acetylating) activity"/>
    <property type="evidence" value="ECO:0007669"/>
    <property type="project" value="UniProtKB-UniRule"/>
</dbReference>
<dbReference type="GO" id="GO:0051287">
    <property type="term" value="F:NAD binding"/>
    <property type="evidence" value="ECO:0007669"/>
    <property type="project" value="UniProtKB-UniRule"/>
</dbReference>
<dbReference type="GO" id="GO:0009056">
    <property type="term" value="P:catabolic process"/>
    <property type="evidence" value="ECO:0007669"/>
    <property type="project" value="UniProtKB-KW"/>
</dbReference>
<dbReference type="CDD" id="cd23933">
    <property type="entry name" value="ALDH_C"/>
    <property type="match status" value="1"/>
</dbReference>
<dbReference type="Gene3D" id="3.30.360.10">
    <property type="entry name" value="Dihydrodipicolinate Reductase, domain 2"/>
    <property type="match status" value="1"/>
</dbReference>
<dbReference type="Gene3D" id="3.40.50.720">
    <property type="entry name" value="NAD(P)-binding Rossmann-like Domain"/>
    <property type="match status" value="1"/>
</dbReference>
<dbReference type="HAMAP" id="MF_01657">
    <property type="entry name" value="Ac_ald_DH_ac"/>
    <property type="match status" value="1"/>
</dbReference>
<dbReference type="InterPro" id="IPR003361">
    <property type="entry name" value="Acetaldehyde_dehydrogenase"/>
</dbReference>
<dbReference type="InterPro" id="IPR015426">
    <property type="entry name" value="Acetylaldehyde_DH_C"/>
</dbReference>
<dbReference type="InterPro" id="IPR036291">
    <property type="entry name" value="NAD(P)-bd_dom_sf"/>
</dbReference>
<dbReference type="InterPro" id="IPR000534">
    <property type="entry name" value="Semialdehyde_DH_NAD-bd"/>
</dbReference>
<dbReference type="NCBIfam" id="TIGR03215">
    <property type="entry name" value="ac_ald_DH_ac"/>
    <property type="match status" value="1"/>
</dbReference>
<dbReference type="NCBIfam" id="NF006157">
    <property type="entry name" value="PRK08300.1"/>
    <property type="match status" value="1"/>
</dbReference>
<dbReference type="Pfam" id="PF09290">
    <property type="entry name" value="AcetDehyd-dimer"/>
    <property type="match status" value="1"/>
</dbReference>
<dbReference type="PIRSF" id="PIRSF015689">
    <property type="entry name" value="Actaldh_dh_actl"/>
    <property type="match status" value="1"/>
</dbReference>
<dbReference type="SMART" id="SM00859">
    <property type="entry name" value="Semialdhyde_dh"/>
    <property type="match status" value="1"/>
</dbReference>
<dbReference type="SUPFAM" id="SSF55347">
    <property type="entry name" value="Glyceraldehyde-3-phosphate dehydrogenase-like, C-terminal domain"/>
    <property type="match status" value="1"/>
</dbReference>
<dbReference type="SUPFAM" id="SSF51735">
    <property type="entry name" value="NAD(P)-binding Rossmann-fold domains"/>
    <property type="match status" value="1"/>
</dbReference>
<feature type="chain" id="PRO_0000387711" description="Acetaldehyde dehydrogenase">
    <location>
        <begin position="1"/>
        <end position="307"/>
    </location>
</feature>
<feature type="active site" description="Acyl-thioester intermediate" evidence="1">
    <location>
        <position position="131"/>
    </location>
</feature>
<feature type="binding site" evidence="1">
    <location>
        <begin position="162"/>
        <end position="170"/>
    </location>
    <ligand>
        <name>NAD(+)</name>
        <dbReference type="ChEBI" id="CHEBI:57540"/>
    </ligand>
</feature>
<feature type="binding site" evidence="1">
    <location>
        <position position="273"/>
    </location>
    <ligand>
        <name>NAD(+)</name>
        <dbReference type="ChEBI" id="CHEBI:57540"/>
    </ligand>
</feature>
<gene>
    <name type="primary">nahO</name>
</gene>
<comment type="catalytic activity">
    <reaction evidence="1">
        <text>acetaldehyde + NAD(+) + CoA = acetyl-CoA + NADH + H(+)</text>
        <dbReference type="Rhea" id="RHEA:23288"/>
        <dbReference type="ChEBI" id="CHEBI:15343"/>
        <dbReference type="ChEBI" id="CHEBI:15378"/>
        <dbReference type="ChEBI" id="CHEBI:57287"/>
        <dbReference type="ChEBI" id="CHEBI:57288"/>
        <dbReference type="ChEBI" id="CHEBI:57540"/>
        <dbReference type="ChEBI" id="CHEBI:57945"/>
        <dbReference type="EC" id="1.2.1.10"/>
    </reaction>
</comment>
<comment type="similarity">
    <text evidence="1">Belongs to the acetaldehyde dehydrogenase family.</text>
</comment>
<organism>
    <name type="scientific">Stutzerimonas stutzeri</name>
    <name type="common">Pseudomonas stutzeri</name>
    <dbReference type="NCBI Taxonomy" id="316"/>
    <lineage>
        <taxon>Bacteria</taxon>
        <taxon>Pseudomonadati</taxon>
        <taxon>Pseudomonadota</taxon>
        <taxon>Gammaproteobacteria</taxon>
        <taxon>Pseudomonadales</taxon>
        <taxon>Pseudomonadaceae</taxon>
        <taxon>Stutzerimonas</taxon>
    </lineage>
</organism>